<gene>
    <name evidence="1" type="primary">rplB</name>
    <name type="ordered locus">Rcas_4023</name>
</gene>
<accession>A7NR60</accession>
<dbReference type="EMBL" id="CP000804">
    <property type="protein sequence ID" value="ABU60056.1"/>
    <property type="molecule type" value="Genomic_DNA"/>
</dbReference>
<dbReference type="RefSeq" id="WP_012122478.1">
    <property type="nucleotide sequence ID" value="NC_009767.1"/>
</dbReference>
<dbReference type="SMR" id="A7NR60"/>
<dbReference type="STRING" id="383372.Rcas_4023"/>
<dbReference type="KEGG" id="rca:Rcas_4023"/>
<dbReference type="eggNOG" id="COG0090">
    <property type="taxonomic scope" value="Bacteria"/>
</dbReference>
<dbReference type="HOGENOM" id="CLU_036235_2_1_0"/>
<dbReference type="OrthoDB" id="9778722at2"/>
<dbReference type="Proteomes" id="UP000000263">
    <property type="component" value="Chromosome"/>
</dbReference>
<dbReference type="GO" id="GO:0015934">
    <property type="term" value="C:large ribosomal subunit"/>
    <property type="evidence" value="ECO:0007669"/>
    <property type="project" value="InterPro"/>
</dbReference>
<dbReference type="GO" id="GO:0019843">
    <property type="term" value="F:rRNA binding"/>
    <property type="evidence" value="ECO:0007669"/>
    <property type="project" value="UniProtKB-UniRule"/>
</dbReference>
<dbReference type="GO" id="GO:0003735">
    <property type="term" value="F:structural constituent of ribosome"/>
    <property type="evidence" value="ECO:0007669"/>
    <property type="project" value="InterPro"/>
</dbReference>
<dbReference type="GO" id="GO:0016740">
    <property type="term" value="F:transferase activity"/>
    <property type="evidence" value="ECO:0007669"/>
    <property type="project" value="InterPro"/>
</dbReference>
<dbReference type="GO" id="GO:0002181">
    <property type="term" value="P:cytoplasmic translation"/>
    <property type="evidence" value="ECO:0007669"/>
    <property type="project" value="TreeGrafter"/>
</dbReference>
<dbReference type="FunFam" id="2.30.30.30:FF:000001">
    <property type="entry name" value="50S ribosomal protein L2"/>
    <property type="match status" value="1"/>
</dbReference>
<dbReference type="FunFam" id="2.40.50.140:FF:000003">
    <property type="entry name" value="50S ribosomal protein L2"/>
    <property type="match status" value="1"/>
</dbReference>
<dbReference type="FunFam" id="4.10.950.10:FF:000001">
    <property type="entry name" value="50S ribosomal protein L2"/>
    <property type="match status" value="1"/>
</dbReference>
<dbReference type="Gene3D" id="2.30.30.30">
    <property type="match status" value="1"/>
</dbReference>
<dbReference type="Gene3D" id="2.40.50.140">
    <property type="entry name" value="Nucleic acid-binding proteins"/>
    <property type="match status" value="1"/>
</dbReference>
<dbReference type="Gene3D" id="4.10.950.10">
    <property type="entry name" value="Ribosomal protein L2, domain 3"/>
    <property type="match status" value="1"/>
</dbReference>
<dbReference type="HAMAP" id="MF_01320_B">
    <property type="entry name" value="Ribosomal_uL2_B"/>
    <property type="match status" value="1"/>
</dbReference>
<dbReference type="InterPro" id="IPR012340">
    <property type="entry name" value="NA-bd_OB-fold"/>
</dbReference>
<dbReference type="InterPro" id="IPR014722">
    <property type="entry name" value="Rib_uL2_dom2"/>
</dbReference>
<dbReference type="InterPro" id="IPR002171">
    <property type="entry name" value="Ribosomal_uL2"/>
</dbReference>
<dbReference type="InterPro" id="IPR005880">
    <property type="entry name" value="Ribosomal_uL2_bac/org-type"/>
</dbReference>
<dbReference type="InterPro" id="IPR022669">
    <property type="entry name" value="Ribosomal_uL2_C"/>
</dbReference>
<dbReference type="InterPro" id="IPR022671">
    <property type="entry name" value="Ribosomal_uL2_CS"/>
</dbReference>
<dbReference type="InterPro" id="IPR014726">
    <property type="entry name" value="Ribosomal_uL2_dom3"/>
</dbReference>
<dbReference type="InterPro" id="IPR022666">
    <property type="entry name" value="Ribosomal_uL2_RNA-bd_dom"/>
</dbReference>
<dbReference type="InterPro" id="IPR008991">
    <property type="entry name" value="Translation_prot_SH3-like_sf"/>
</dbReference>
<dbReference type="NCBIfam" id="TIGR01171">
    <property type="entry name" value="rplB_bact"/>
    <property type="match status" value="1"/>
</dbReference>
<dbReference type="PANTHER" id="PTHR13691:SF5">
    <property type="entry name" value="LARGE RIBOSOMAL SUBUNIT PROTEIN UL2M"/>
    <property type="match status" value="1"/>
</dbReference>
<dbReference type="PANTHER" id="PTHR13691">
    <property type="entry name" value="RIBOSOMAL PROTEIN L2"/>
    <property type="match status" value="1"/>
</dbReference>
<dbReference type="Pfam" id="PF00181">
    <property type="entry name" value="Ribosomal_L2"/>
    <property type="match status" value="1"/>
</dbReference>
<dbReference type="Pfam" id="PF03947">
    <property type="entry name" value="Ribosomal_L2_C"/>
    <property type="match status" value="1"/>
</dbReference>
<dbReference type="PIRSF" id="PIRSF002158">
    <property type="entry name" value="Ribosomal_L2"/>
    <property type="match status" value="1"/>
</dbReference>
<dbReference type="SMART" id="SM01383">
    <property type="entry name" value="Ribosomal_L2"/>
    <property type="match status" value="1"/>
</dbReference>
<dbReference type="SMART" id="SM01382">
    <property type="entry name" value="Ribosomal_L2_C"/>
    <property type="match status" value="1"/>
</dbReference>
<dbReference type="SUPFAM" id="SSF50249">
    <property type="entry name" value="Nucleic acid-binding proteins"/>
    <property type="match status" value="1"/>
</dbReference>
<dbReference type="SUPFAM" id="SSF50104">
    <property type="entry name" value="Translation proteins SH3-like domain"/>
    <property type="match status" value="1"/>
</dbReference>
<dbReference type="PROSITE" id="PS00467">
    <property type="entry name" value="RIBOSOMAL_L2"/>
    <property type="match status" value="1"/>
</dbReference>
<evidence type="ECO:0000255" key="1">
    <source>
        <dbReference type="HAMAP-Rule" id="MF_01320"/>
    </source>
</evidence>
<evidence type="ECO:0000256" key="2">
    <source>
        <dbReference type="SAM" id="MobiDB-lite"/>
    </source>
</evidence>
<evidence type="ECO:0000305" key="3"/>
<reference key="1">
    <citation type="submission" date="2007-08" db="EMBL/GenBank/DDBJ databases">
        <title>Complete sequence of Roseiflexus castenholzii DSM 13941.</title>
        <authorList>
            <consortium name="US DOE Joint Genome Institute"/>
            <person name="Copeland A."/>
            <person name="Lucas S."/>
            <person name="Lapidus A."/>
            <person name="Barry K."/>
            <person name="Glavina del Rio T."/>
            <person name="Dalin E."/>
            <person name="Tice H."/>
            <person name="Pitluck S."/>
            <person name="Thompson L.S."/>
            <person name="Brettin T."/>
            <person name="Bruce D."/>
            <person name="Detter J.C."/>
            <person name="Han C."/>
            <person name="Tapia R."/>
            <person name="Schmutz J."/>
            <person name="Larimer F."/>
            <person name="Land M."/>
            <person name="Hauser L."/>
            <person name="Kyrpides N."/>
            <person name="Mikhailova N."/>
            <person name="Bryant D.A."/>
            <person name="Hanada S."/>
            <person name="Tsukatani Y."/>
            <person name="Richardson P."/>
        </authorList>
    </citation>
    <scope>NUCLEOTIDE SEQUENCE [LARGE SCALE GENOMIC DNA]</scope>
    <source>
        <strain>DSM 13941 / HLO8</strain>
    </source>
</reference>
<name>RL2_ROSCS</name>
<comment type="function">
    <text evidence="1">One of the primary rRNA binding proteins. Required for association of the 30S and 50S subunits to form the 70S ribosome, for tRNA binding and peptide bond formation. It has been suggested to have peptidyltransferase activity; this is somewhat controversial. Makes several contacts with the 16S rRNA in the 70S ribosome.</text>
</comment>
<comment type="subunit">
    <text evidence="1">Part of the 50S ribosomal subunit. Forms a bridge to the 30S subunit in the 70S ribosome.</text>
</comment>
<comment type="similarity">
    <text evidence="1">Belongs to the universal ribosomal protein uL2 family.</text>
</comment>
<protein>
    <recommendedName>
        <fullName evidence="1">Large ribosomal subunit protein uL2</fullName>
    </recommendedName>
    <alternativeName>
        <fullName evidence="3">50S ribosomal protein L2</fullName>
    </alternativeName>
</protein>
<proteinExistence type="inferred from homology"/>
<keyword id="KW-1185">Reference proteome</keyword>
<keyword id="KW-0687">Ribonucleoprotein</keyword>
<keyword id="KW-0689">Ribosomal protein</keyword>
<keyword id="KW-0694">RNA-binding</keyword>
<keyword id="KW-0699">rRNA-binding</keyword>
<feature type="chain" id="PRO_1000086346" description="Large ribosomal subunit protein uL2">
    <location>
        <begin position="1"/>
        <end position="275"/>
    </location>
</feature>
<feature type="region of interest" description="Disordered" evidence="2">
    <location>
        <begin position="219"/>
        <end position="263"/>
    </location>
</feature>
<feature type="compositionally biased region" description="Basic and acidic residues" evidence="2">
    <location>
        <begin position="227"/>
        <end position="239"/>
    </location>
</feature>
<feature type="compositionally biased region" description="Basic residues" evidence="2">
    <location>
        <begin position="249"/>
        <end position="262"/>
    </location>
</feature>
<sequence length="275" mass="30657">MPVRKYKPTSAGRRNMSVSTFEEITKKEPERSLLEPLRKKAGRNVYGRITVRHRGGGHKRHYRKIDFKRDKVGIPAKVAAIEYDPNRSARIALLHYVDGEKRYILAPLGLNVGDTVMSGPAADIRVGNALPLRQIPLGTQVHNIELEKGRGGVMVRSAGAAAQLMAKEGNYATLRMPSGEVRRVFIECMATIGQVGNLDHQNVRLGKAGRKRWLGRRPEVRGAAMNPRDHPHGGGEGRAPRGMPTPKTKWGKPARGVKTRHNPRTDAFIIRRRTR</sequence>
<organism>
    <name type="scientific">Roseiflexus castenholzii (strain DSM 13941 / HLO8)</name>
    <dbReference type="NCBI Taxonomy" id="383372"/>
    <lineage>
        <taxon>Bacteria</taxon>
        <taxon>Bacillati</taxon>
        <taxon>Chloroflexota</taxon>
        <taxon>Chloroflexia</taxon>
        <taxon>Chloroflexales</taxon>
        <taxon>Roseiflexineae</taxon>
        <taxon>Roseiflexaceae</taxon>
        <taxon>Roseiflexus</taxon>
    </lineage>
</organism>